<reference key="1">
    <citation type="journal article" date="2006" name="Nat. Biotechnol.">
        <title>The genome and transcriptomes of the anti-tumor agent Clostridium novyi-NT.</title>
        <authorList>
            <person name="Bettegowda C."/>
            <person name="Huang X."/>
            <person name="Lin J."/>
            <person name="Cheong I."/>
            <person name="Kohli M."/>
            <person name="Szabo S.A."/>
            <person name="Zhang X."/>
            <person name="Diaz L.A. Jr."/>
            <person name="Velculescu V.E."/>
            <person name="Parmigiani G."/>
            <person name="Kinzler K.W."/>
            <person name="Vogelstein B."/>
            <person name="Zhou S."/>
        </authorList>
    </citation>
    <scope>NUCLEOTIDE SEQUENCE [LARGE SCALE GENOMIC DNA]</scope>
    <source>
        <strain>NT</strain>
    </source>
</reference>
<gene>
    <name evidence="1" type="primary">rsmG</name>
    <name type="ordered locus">NT01CX_0875</name>
</gene>
<sequence length="243" mass="27597">MNSEKIFYDILNVAAENVDLEFNDKKYNQFIQYKDLLKDWNGKVNLTAITEDEEIIKKHFIDSMKIFQFEYLRKANKIIDIGTGGGFPGIPMKIMRPDADIVLLDSLKKRINVLDDILNKIGINDVETIHGRAEEFAKNPKYREKFDAVVSRAVANLASLSEFCLPYVKVGGYFVALKGPAVDEEVKIAKKAISILGGKLEEIREVEIEDSDLKHNLVIIKKIKNTPKQYPRKPGTATKKPLI</sequence>
<evidence type="ECO:0000255" key="1">
    <source>
        <dbReference type="HAMAP-Rule" id="MF_00074"/>
    </source>
</evidence>
<proteinExistence type="inferred from homology"/>
<organism>
    <name type="scientific">Clostridium novyi (strain NT)</name>
    <dbReference type="NCBI Taxonomy" id="386415"/>
    <lineage>
        <taxon>Bacteria</taxon>
        <taxon>Bacillati</taxon>
        <taxon>Bacillota</taxon>
        <taxon>Clostridia</taxon>
        <taxon>Eubacteriales</taxon>
        <taxon>Clostridiaceae</taxon>
        <taxon>Clostridium</taxon>
    </lineage>
</organism>
<feature type="chain" id="PRO_0000335336" description="Ribosomal RNA small subunit methyltransferase G">
    <location>
        <begin position="1"/>
        <end position="243"/>
    </location>
</feature>
<feature type="binding site" evidence="1">
    <location>
        <position position="82"/>
    </location>
    <ligand>
        <name>S-adenosyl-L-methionine</name>
        <dbReference type="ChEBI" id="CHEBI:59789"/>
    </ligand>
</feature>
<feature type="binding site" evidence="1">
    <location>
        <position position="87"/>
    </location>
    <ligand>
        <name>S-adenosyl-L-methionine</name>
        <dbReference type="ChEBI" id="CHEBI:59789"/>
    </ligand>
</feature>
<feature type="binding site" evidence="1">
    <location>
        <begin position="133"/>
        <end position="134"/>
    </location>
    <ligand>
        <name>S-adenosyl-L-methionine</name>
        <dbReference type="ChEBI" id="CHEBI:59789"/>
    </ligand>
</feature>
<feature type="binding site" evidence="1">
    <location>
        <position position="152"/>
    </location>
    <ligand>
        <name>S-adenosyl-L-methionine</name>
        <dbReference type="ChEBI" id="CHEBI:59789"/>
    </ligand>
</feature>
<keyword id="KW-0963">Cytoplasm</keyword>
<keyword id="KW-0489">Methyltransferase</keyword>
<keyword id="KW-1185">Reference proteome</keyword>
<keyword id="KW-0698">rRNA processing</keyword>
<keyword id="KW-0949">S-adenosyl-L-methionine</keyword>
<keyword id="KW-0808">Transferase</keyword>
<name>RSMG_CLONN</name>
<accession>A0PX79</accession>
<comment type="function">
    <text evidence="1">Specifically methylates the N7 position of a guanine in 16S rRNA.</text>
</comment>
<comment type="subcellular location">
    <subcellularLocation>
        <location evidence="1">Cytoplasm</location>
    </subcellularLocation>
</comment>
<comment type="similarity">
    <text evidence="1">Belongs to the methyltransferase superfamily. RNA methyltransferase RsmG family.</text>
</comment>
<protein>
    <recommendedName>
        <fullName evidence="1">Ribosomal RNA small subunit methyltransferase G</fullName>
        <ecNumber evidence="1">2.1.1.-</ecNumber>
    </recommendedName>
    <alternativeName>
        <fullName evidence="1">16S rRNA 7-methylguanosine methyltransferase</fullName>
        <shortName evidence="1">16S rRNA m7G methyltransferase</shortName>
    </alternativeName>
</protein>
<dbReference type="EC" id="2.1.1.-" evidence="1"/>
<dbReference type="EMBL" id="CP000382">
    <property type="protein sequence ID" value="ABK61566.1"/>
    <property type="molecule type" value="Genomic_DNA"/>
</dbReference>
<dbReference type="RefSeq" id="WP_011721002.1">
    <property type="nucleotide sequence ID" value="NC_008593.1"/>
</dbReference>
<dbReference type="SMR" id="A0PX79"/>
<dbReference type="STRING" id="386415.NT01CX_0875"/>
<dbReference type="KEGG" id="cno:NT01CX_0875"/>
<dbReference type="PATRIC" id="fig|386415.7.peg.8"/>
<dbReference type="eggNOG" id="COG0357">
    <property type="taxonomic scope" value="Bacteria"/>
</dbReference>
<dbReference type="HOGENOM" id="CLU_065341_0_0_9"/>
<dbReference type="Proteomes" id="UP000008220">
    <property type="component" value="Chromosome"/>
</dbReference>
<dbReference type="GO" id="GO:0005829">
    <property type="term" value="C:cytosol"/>
    <property type="evidence" value="ECO:0007669"/>
    <property type="project" value="TreeGrafter"/>
</dbReference>
<dbReference type="GO" id="GO:0070043">
    <property type="term" value="F:rRNA (guanine-N7-)-methyltransferase activity"/>
    <property type="evidence" value="ECO:0007669"/>
    <property type="project" value="UniProtKB-UniRule"/>
</dbReference>
<dbReference type="CDD" id="cd02440">
    <property type="entry name" value="AdoMet_MTases"/>
    <property type="match status" value="1"/>
</dbReference>
<dbReference type="FunFam" id="3.40.50.150:FF:000041">
    <property type="entry name" value="Ribosomal RNA small subunit methyltransferase G"/>
    <property type="match status" value="1"/>
</dbReference>
<dbReference type="Gene3D" id="3.40.50.150">
    <property type="entry name" value="Vaccinia Virus protein VP39"/>
    <property type="match status" value="1"/>
</dbReference>
<dbReference type="HAMAP" id="MF_00074">
    <property type="entry name" value="16SrRNA_methyltr_G"/>
    <property type="match status" value="1"/>
</dbReference>
<dbReference type="InterPro" id="IPR003682">
    <property type="entry name" value="rRNA_ssu_MeTfrase_G"/>
</dbReference>
<dbReference type="InterPro" id="IPR029063">
    <property type="entry name" value="SAM-dependent_MTases_sf"/>
</dbReference>
<dbReference type="NCBIfam" id="TIGR00138">
    <property type="entry name" value="rsmG_gidB"/>
    <property type="match status" value="1"/>
</dbReference>
<dbReference type="PANTHER" id="PTHR31760">
    <property type="entry name" value="S-ADENOSYL-L-METHIONINE-DEPENDENT METHYLTRANSFERASES SUPERFAMILY PROTEIN"/>
    <property type="match status" value="1"/>
</dbReference>
<dbReference type="PANTHER" id="PTHR31760:SF0">
    <property type="entry name" value="S-ADENOSYL-L-METHIONINE-DEPENDENT METHYLTRANSFERASES SUPERFAMILY PROTEIN"/>
    <property type="match status" value="1"/>
</dbReference>
<dbReference type="Pfam" id="PF02527">
    <property type="entry name" value="GidB"/>
    <property type="match status" value="1"/>
</dbReference>
<dbReference type="PIRSF" id="PIRSF003078">
    <property type="entry name" value="GidB"/>
    <property type="match status" value="1"/>
</dbReference>
<dbReference type="SUPFAM" id="SSF53335">
    <property type="entry name" value="S-adenosyl-L-methionine-dependent methyltransferases"/>
    <property type="match status" value="1"/>
</dbReference>